<proteinExistence type="inferred from homology"/>
<dbReference type="EC" id="6.3.1.1" evidence="1"/>
<dbReference type="EMBL" id="CP001177">
    <property type="protein sequence ID" value="ACJ80904.1"/>
    <property type="molecule type" value="Genomic_DNA"/>
</dbReference>
<dbReference type="SMR" id="B7HMI7"/>
<dbReference type="KEGG" id="bcr:BCAH187_A1928"/>
<dbReference type="HOGENOM" id="CLU_071543_0_0_9"/>
<dbReference type="UniPathway" id="UPA00134">
    <property type="reaction ID" value="UER00194"/>
</dbReference>
<dbReference type="Proteomes" id="UP000002214">
    <property type="component" value="Chromosome"/>
</dbReference>
<dbReference type="GO" id="GO:0005829">
    <property type="term" value="C:cytosol"/>
    <property type="evidence" value="ECO:0007669"/>
    <property type="project" value="TreeGrafter"/>
</dbReference>
<dbReference type="GO" id="GO:0004071">
    <property type="term" value="F:aspartate-ammonia ligase activity"/>
    <property type="evidence" value="ECO:0007669"/>
    <property type="project" value="UniProtKB-UniRule"/>
</dbReference>
<dbReference type="GO" id="GO:0005524">
    <property type="term" value="F:ATP binding"/>
    <property type="evidence" value="ECO:0007669"/>
    <property type="project" value="UniProtKB-UniRule"/>
</dbReference>
<dbReference type="GO" id="GO:0140096">
    <property type="term" value="F:catalytic activity, acting on a protein"/>
    <property type="evidence" value="ECO:0007669"/>
    <property type="project" value="UniProtKB-ARBA"/>
</dbReference>
<dbReference type="GO" id="GO:0016740">
    <property type="term" value="F:transferase activity"/>
    <property type="evidence" value="ECO:0007669"/>
    <property type="project" value="UniProtKB-ARBA"/>
</dbReference>
<dbReference type="GO" id="GO:0070981">
    <property type="term" value="P:L-asparagine biosynthetic process"/>
    <property type="evidence" value="ECO:0007669"/>
    <property type="project" value="UniProtKB-UniRule"/>
</dbReference>
<dbReference type="CDD" id="cd00645">
    <property type="entry name" value="AsnA"/>
    <property type="match status" value="1"/>
</dbReference>
<dbReference type="Gene3D" id="3.30.930.10">
    <property type="entry name" value="Bira Bifunctional Protein, Domain 2"/>
    <property type="match status" value="1"/>
</dbReference>
<dbReference type="HAMAP" id="MF_00555">
    <property type="entry name" value="AsnA"/>
    <property type="match status" value="1"/>
</dbReference>
<dbReference type="InterPro" id="IPR006195">
    <property type="entry name" value="aa-tRNA-synth_II"/>
</dbReference>
<dbReference type="InterPro" id="IPR045864">
    <property type="entry name" value="aa-tRNA-synth_II/BPL/LPL"/>
</dbReference>
<dbReference type="InterPro" id="IPR004618">
    <property type="entry name" value="AsnA"/>
</dbReference>
<dbReference type="NCBIfam" id="TIGR00669">
    <property type="entry name" value="asnA"/>
    <property type="match status" value="1"/>
</dbReference>
<dbReference type="PANTHER" id="PTHR30073">
    <property type="entry name" value="ASPARTATE--AMMONIA LIGASE"/>
    <property type="match status" value="1"/>
</dbReference>
<dbReference type="PANTHER" id="PTHR30073:SF5">
    <property type="entry name" value="ASPARTATE--AMMONIA LIGASE"/>
    <property type="match status" value="1"/>
</dbReference>
<dbReference type="Pfam" id="PF03590">
    <property type="entry name" value="AsnA"/>
    <property type="match status" value="1"/>
</dbReference>
<dbReference type="PIRSF" id="PIRSF001555">
    <property type="entry name" value="Asp_ammon_ligase"/>
    <property type="match status" value="1"/>
</dbReference>
<dbReference type="SUPFAM" id="SSF55681">
    <property type="entry name" value="Class II aaRS and biotin synthetases"/>
    <property type="match status" value="1"/>
</dbReference>
<dbReference type="PROSITE" id="PS50862">
    <property type="entry name" value="AA_TRNA_LIGASE_II"/>
    <property type="match status" value="1"/>
</dbReference>
<gene>
    <name evidence="1" type="primary">asnA</name>
    <name type="ordered locus">BCAH187_A1928</name>
</gene>
<feature type="chain" id="PRO_1000129109" description="Aspartate--ammonia ligase">
    <location>
        <begin position="1"/>
        <end position="327"/>
    </location>
</feature>
<name>ASNA_BACC7</name>
<comment type="catalytic activity">
    <reaction evidence="1">
        <text>L-aspartate + NH4(+) + ATP = L-asparagine + AMP + diphosphate + H(+)</text>
        <dbReference type="Rhea" id="RHEA:11372"/>
        <dbReference type="ChEBI" id="CHEBI:15378"/>
        <dbReference type="ChEBI" id="CHEBI:28938"/>
        <dbReference type="ChEBI" id="CHEBI:29991"/>
        <dbReference type="ChEBI" id="CHEBI:30616"/>
        <dbReference type="ChEBI" id="CHEBI:33019"/>
        <dbReference type="ChEBI" id="CHEBI:58048"/>
        <dbReference type="ChEBI" id="CHEBI:456215"/>
        <dbReference type="EC" id="6.3.1.1"/>
    </reaction>
</comment>
<comment type="pathway">
    <text evidence="1">Amino-acid biosynthesis; L-asparagine biosynthesis; L-asparagine from L-aspartate (ammonia route): step 1/1.</text>
</comment>
<comment type="subcellular location">
    <subcellularLocation>
        <location evidence="1">Cytoplasm</location>
    </subcellularLocation>
</comment>
<comment type="similarity">
    <text evidence="1">Belongs to the class-II aminoacyl-tRNA synthetase family. AsnA subfamily.</text>
</comment>
<keyword id="KW-0028">Amino-acid biosynthesis</keyword>
<keyword id="KW-0061">Asparagine biosynthesis</keyword>
<keyword id="KW-0067">ATP-binding</keyword>
<keyword id="KW-0963">Cytoplasm</keyword>
<keyword id="KW-0436">Ligase</keyword>
<keyword id="KW-0547">Nucleotide-binding</keyword>
<protein>
    <recommendedName>
        <fullName evidence="1">Aspartate--ammonia ligase</fullName>
        <ecNumber evidence="1">6.3.1.1</ecNumber>
    </recommendedName>
    <alternativeName>
        <fullName evidence="1">Asparagine synthetase A</fullName>
    </alternativeName>
</protein>
<organism>
    <name type="scientific">Bacillus cereus (strain AH187)</name>
    <dbReference type="NCBI Taxonomy" id="405534"/>
    <lineage>
        <taxon>Bacteria</taxon>
        <taxon>Bacillati</taxon>
        <taxon>Bacillota</taxon>
        <taxon>Bacilli</taxon>
        <taxon>Bacillales</taxon>
        <taxon>Bacillaceae</taxon>
        <taxon>Bacillus</taxon>
        <taxon>Bacillus cereus group</taxon>
    </lineage>
</organism>
<sequence>MYQSLMTVRETQIAIKEVKTFFEDQLAKRLELFRVSAPLFVTKKSGLNDHLNGVERPIEFDMLHSGEELEIVHSLAKWKRFALHEYGYEAGEGLYTNMNAIRRDEELDATHSIYVDQWDWEKIVQKEWRTVDYLQKTVLTIYGIFKDLEDHLFEKYPFLGKYLPEEIVFVTSQELEDKYPELTPKDREHAIAKEHGAVFIIGIGDALRSGEKHDGRAADYDDWKLNGDILFWHPVLQSSFELSSMGIRVDSKSLDEQLTKTGEDYKREYDFHKGILEDVLPLTIGGGIGQSRMCMYFLRKAHIGEVQSSVWPDDLREACKKENIHLF</sequence>
<accession>B7HMI7</accession>
<reference key="1">
    <citation type="submission" date="2008-10" db="EMBL/GenBank/DDBJ databases">
        <title>Genome sequence of Bacillus cereus AH187.</title>
        <authorList>
            <person name="Dodson R.J."/>
            <person name="Durkin A.S."/>
            <person name="Rosovitz M.J."/>
            <person name="Rasko D.A."/>
            <person name="Kolsto A.B."/>
            <person name="Okstad O.A."/>
            <person name="Ravel J."/>
            <person name="Sutton G."/>
        </authorList>
    </citation>
    <scope>NUCLEOTIDE SEQUENCE [LARGE SCALE GENOMIC DNA]</scope>
    <source>
        <strain>AH187</strain>
    </source>
</reference>
<evidence type="ECO:0000255" key="1">
    <source>
        <dbReference type="HAMAP-Rule" id="MF_00555"/>
    </source>
</evidence>